<comment type="function">
    <text evidence="1 2">Catalytic component of the signal peptidase complex (SPC) which catalyzes the cleavage of N-terminal signal sequences from nascent proteins as they are translocated into the lumen of the endoplasmic reticulum (By similarity). Specifically cleaves N-terminal signal peptides that contain a hydrophobic alpha-helix (h-region) shorter than 18-20 amino acids (By similarity).</text>
</comment>
<comment type="catalytic activity">
    <reaction evidence="1">
        <text>Cleavage of hydrophobic, N-terminal signal or leader sequences from secreted and periplasmic proteins.</text>
        <dbReference type="EC" id="3.4.21.89"/>
    </reaction>
</comment>
<comment type="subunit">
    <text evidence="1 2">Component of the signal peptidase complex (SPC) composed of a catalytic subunit SEC11 and three accessory subunits SPC1, SPC2 and SPC3 (By similarity). The complex induces a local thinning of the ER membrane which is used to measure the length of the signal peptide (SP) h-region of protein substrates. This ensures the selectivity of the complex towards h-regions shorter than 18-20 amino acids (By similarity). SPC associates with the translocon complex (By similarity).</text>
</comment>
<comment type="subcellular location">
    <subcellularLocation>
        <location evidence="1">Endoplasmic reticulum membrane</location>
        <topology evidence="1">Single-pass type II membrane protein</topology>
    </subcellularLocation>
</comment>
<comment type="domain">
    <text evidence="2">The C-terminal short (CTS) helix is essential for catalytic activity. It may be accommodated as a transmembrane helix in the thinned membrane environment of the complex, similarly to the signal peptide in the complex substrates.</text>
</comment>
<comment type="similarity">
    <text evidence="4">Belongs to the peptidase S26B family.</text>
</comment>
<name>SEC11_ASPFU</name>
<dbReference type="EC" id="3.4.21.89" evidence="1"/>
<dbReference type="EMBL" id="AAHF01000002">
    <property type="protein sequence ID" value="EAL92299.1"/>
    <property type="molecule type" value="Genomic_DNA"/>
</dbReference>
<dbReference type="RefSeq" id="XP_754337.1">
    <property type="nucleotide sequence ID" value="XM_749244.1"/>
</dbReference>
<dbReference type="SMR" id="Q4WYF4"/>
<dbReference type="FunCoup" id="Q4WYF4">
    <property type="interactions" value="663"/>
</dbReference>
<dbReference type="STRING" id="330879.Q4WYF4"/>
<dbReference type="MEROPS" id="S26.010"/>
<dbReference type="EnsemblFungi" id="EAL92299">
    <property type="protein sequence ID" value="EAL92299"/>
    <property type="gene ID" value="AFUA_3G12840"/>
</dbReference>
<dbReference type="GeneID" id="3512506"/>
<dbReference type="KEGG" id="afm:AFUA_3G12840"/>
<dbReference type="VEuPathDB" id="FungiDB:Afu3g12840"/>
<dbReference type="eggNOG" id="KOG3342">
    <property type="taxonomic scope" value="Eukaryota"/>
</dbReference>
<dbReference type="HOGENOM" id="CLU_089996_0_0_1"/>
<dbReference type="InParanoid" id="Q4WYF4"/>
<dbReference type="OMA" id="ILMNEYP"/>
<dbReference type="OrthoDB" id="10257561at2759"/>
<dbReference type="Proteomes" id="UP000002530">
    <property type="component" value="Chromosome 3"/>
</dbReference>
<dbReference type="GO" id="GO:0005787">
    <property type="term" value="C:signal peptidase complex"/>
    <property type="evidence" value="ECO:0000318"/>
    <property type="project" value="GO_Central"/>
</dbReference>
<dbReference type="GO" id="GO:0008233">
    <property type="term" value="F:peptidase activity"/>
    <property type="evidence" value="ECO:0000318"/>
    <property type="project" value="GO_Central"/>
</dbReference>
<dbReference type="GO" id="GO:0004252">
    <property type="term" value="F:serine-type endopeptidase activity"/>
    <property type="evidence" value="ECO:0007669"/>
    <property type="project" value="UniProtKB-EC"/>
</dbReference>
<dbReference type="GO" id="GO:0045047">
    <property type="term" value="P:protein targeting to ER"/>
    <property type="evidence" value="ECO:0007669"/>
    <property type="project" value="EnsemblFungi"/>
</dbReference>
<dbReference type="GO" id="GO:0006465">
    <property type="term" value="P:signal peptide processing"/>
    <property type="evidence" value="ECO:0000318"/>
    <property type="project" value="GO_Central"/>
</dbReference>
<dbReference type="CDD" id="cd06530">
    <property type="entry name" value="S26_SPase_I"/>
    <property type="match status" value="1"/>
</dbReference>
<dbReference type="InterPro" id="IPR036286">
    <property type="entry name" value="LexA/Signal_pep-like_sf"/>
</dbReference>
<dbReference type="InterPro" id="IPR019756">
    <property type="entry name" value="Pept_S26A_signal_pept_1_Ser-AS"/>
</dbReference>
<dbReference type="InterPro" id="IPR019533">
    <property type="entry name" value="Peptidase_S26"/>
</dbReference>
<dbReference type="InterPro" id="IPR001733">
    <property type="entry name" value="Peptidase_S26B"/>
</dbReference>
<dbReference type="NCBIfam" id="TIGR02228">
    <property type="entry name" value="sigpep_I_arch"/>
    <property type="match status" value="1"/>
</dbReference>
<dbReference type="PANTHER" id="PTHR10806">
    <property type="entry name" value="SIGNAL PEPTIDASE COMPLEX CATALYTIC SUBUNIT SEC11"/>
    <property type="match status" value="1"/>
</dbReference>
<dbReference type="PANTHER" id="PTHR10806:SF6">
    <property type="entry name" value="SIGNAL PEPTIDASE COMPLEX CATALYTIC SUBUNIT SEC11"/>
    <property type="match status" value="1"/>
</dbReference>
<dbReference type="PRINTS" id="PR00728">
    <property type="entry name" value="SIGNALPTASE"/>
</dbReference>
<dbReference type="SUPFAM" id="SSF51306">
    <property type="entry name" value="LexA/Signal peptidase"/>
    <property type="match status" value="1"/>
</dbReference>
<dbReference type="PROSITE" id="PS00501">
    <property type="entry name" value="SPASE_I_1"/>
    <property type="match status" value="1"/>
</dbReference>
<proteinExistence type="inferred from homology"/>
<sequence>MLSFLSSNLSSTRQSMAQVLNFALVLSTAFMLWKGLSVFTASSSPIVVVLSGSMEPAFQRGDLLFLWNRSPRAELGEIVVYNVRGKDIPIVHRVVRTFPQIEGKAKKVKEVNEASSVPPNMLLTKGDNNIADDTELYAKNQDFLHREEDIVGSVRGYMPMVGYVTIMLSEHPWLKTVLLGIMGLMVILQREQ</sequence>
<gene>
    <name type="primary">sec11</name>
    <name type="ORF">AFUA_3G12840</name>
</gene>
<reference key="1">
    <citation type="journal article" date="2005" name="Nature">
        <title>Genomic sequence of the pathogenic and allergenic filamentous fungus Aspergillus fumigatus.</title>
        <authorList>
            <person name="Nierman W.C."/>
            <person name="Pain A."/>
            <person name="Anderson M.J."/>
            <person name="Wortman J.R."/>
            <person name="Kim H.S."/>
            <person name="Arroyo J."/>
            <person name="Berriman M."/>
            <person name="Abe K."/>
            <person name="Archer D.B."/>
            <person name="Bermejo C."/>
            <person name="Bennett J.W."/>
            <person name="Bowyer P."/>
            <person name="Chen D."/>
            <person name="Collins M."/>
            <person name="Coulsen R."/>
            <person name="Davies R."/>
            <person name="Dyer P.S."/>
            <person name="Farman M.L."/>
            <person name="Fedorova N."/>
            <person name="Fedorova N.D."/>
            <person name="Feldblyum T.V."/>
            <person name="Fischer R."/>
            <person name="Fosker N."/>
            <person name="Fraser A."/>
            <person name="Garcia J.L."/>
            <person name="Garcia M.J."/>
            <person name="Goble A."/>
            <person name="Goldman G.H."/>
            <person name="Gomi K."/>
            <person name="Griffith-Jones S."/>
            <person name="Gwilliam R."/>
            <person name="Haas B.J."/>
            <person name="Haas H."/>
            <person name="Harris D.E."/>
            <person name="Horiuchi H."/>
            <person name="Huang J."/>
            <person name="Humphray S."/>
            <person name="Jimenez J."/>
            <person name="Keller N."/>
            <person name="Khouri H."/>
            <person name="Kitamoto K."/>
            <person name="Kobayashi T."/>
            <person name="Konzack S."/>
            <person name="Kulkarni R."/>
            <person name="Kumagai T."/>
            <person name="Lafton A."/>
            <person name="Latge J.-P."/>
            <person name="Li W."/>
            <person name="Lord A."/>
            <person name="Lu C."/>
            <person name="Majoros W.H."/>
            <person name="May G.S."/>
            <person name="Miller B.L."/>
            <person name="Mohamoud Y."/>
            <person name="Molina M."/>
            <person name="Monod M."/>
            <person name="Mouyna I."/>
            <person name="Mulligan S."/>
            <person name="Murphy L.D."/>
            <person name="O'Neil S."/>
            <person name="Paulsen I."/>
            <person name="Penalva M.A."/>
            <person name="Pertea M."/>
            <person name="Price C."/>
            <person name="Pritchard B.L."/>
            <person name="Quail M.A."/>
            <person name="Rabbinowitsch E."/>
            <person name="Rawlins N."/>
            <person name="Rajandream M.A."/>
            <person name="Reichard U."/>
            <person name="Renauld H."/>
            <person name="Robson G.D."/>
            <person name="Rodriguez de Cordoba S."/>
            <person name="Rodriguez-Pena J.M."/>
            <person name="Ronning C.M."/>
            <person name="Rutter S."/>
            <person name="Salzberg S.L."/>
            <person name="Sanchez M."/>
            <person name="Sanchez-Ferrero J.C."/>
            <person name="Saunders D."/>
            <person name="Seeger K."/>
            <person name="Squares R."/>
            <person name="Squares S."/>
            <person name="Takeuchi M."/>
            <person name="Tekaia F."/>
            <person name="Turner G."/>
            <person name="Vazquez de Aldana C.R."/>
            <person name="Weidman J."/>
            <person name="White O."/>
            <person name="Woodward J.R."/>
            <person name="Yu J.-H."/>
            <person name="Fraser C.M."/>
            <person name="Galagan J.E."/>
            <person name="Asai K."/>
            <person name="Machida M."/>
            <person name="Hall N."/>
            <person name="Barrell B.G."/>
            <person name="Denning D.W."/>
        </authorList>
    </citation>
    <scope>NUCLEOTIDE SEQUENCE [LARGE SCALE GENOMIC DNA]</scope>
    <source>
        <strain>ATCC MYA-4609 / CBS 101355 / FGSC A1100 / Af293</strain>
    </source>
</reference>
<organism>
    <name type="scientific">Aspergillus fumigatus (strain ATCC MYA-4609 / CBS 101355 / FGSC A1100 / Af293)</name>
    <name type="common">Neosartorya fumigata</name>
    <dbReference type="NCBI Taxonomy" id="330879"/>
    <lineage>
        <taxon>Eukaryota</taxon>
        <taxon>Fungi</taxon>
        <taxon>Dikarya</taxon>
        <taxon>Ascomycota</taxon>
        <taxon>Pezizomycotina</taxon>
        <taxon>Eurotiomycetes</taxon>
        <taxon>Eurotiomycetidae</taxon>
        <taxon>Eurotiales</taxon>
        <taxon>Aspergillaceae</taxon>
        <taxon>Aspergillus</taxon>
        <taxon>Aspergillus subgen. Fumigati</taxon>
    </lineage>
</organism>
<keyword id="KW-0256">Endoplasmic reticulum</keyword>
<keyword id="KW-0378">Hydrolase</keyword>
<keyword id="KW-0472">Membrane</keyword>
<keyword id="KW-0645">Protease</keyword>
<keyword id="KW-1185">Reference proteome</keyword>
<keyword id="KW-0735">Signal-anchor</keyword>
<keyword id="KW-0812">Transmembrane</keyword>
<keyword id="KW-1133">Transmembrane helix</keyword>
<accession>Q4WYF4</accession>
<feature type="chain" id="PRO_0000412342" description="Signal peptidase complex catalytic subunit sec11">
    <location>
        <begin position="1"/>
        <end position="192"/>
    </location>
</feature>
<feature type="topological domain" description="Cytoplasmic" evidence="3">
    <location>
        <begin position="1"/>
        <end position="18"/>
    </location>
</feature>
<feature type="transmembrane region" description="Helical; Signal-anchor for type II membrane protein" evidence="3">
    <location>
        <begin position="19"/>
        <end position="39"/>
    </location>
</feature>
<feature type="topological domain" description="Lumenal" evidence="3">
    <location>
        <begin position="40"/>
        <end position="192"/>
    </location>
</feature>
<feature type="region of interest" description="C-terminal short (CTS) helix" evidence="2">
    <location>
        <begin position="177"/>
        <end position="188"/>
    </location>
</feature>
<feature type="active site" description="Charge relay system" evidence="1">
    <location>
        <position position="53"/>
    </location>
</feature>
<feature type="active site" description="Charge relay system" evidence="1">
    <location>
        <position position="92"/>
    </location>
</feature>
<feature type="active site" description="Charge relay system" evidence="1">
    <location>
        <position position="133"/>
    </location>
</feature>
<protein>
    <recommendedName>
        <fullName>Signal peptidase complex catalytic subunit sec11</fullName>
        <ecNumber evidence="1">3.4.21.89</ecNumber>
    </recommendedName>
    <alternativeName>
        <fullName>Signal peptidase I</fullName>
    </alternativeName>
</protein>
<evidence type="ECO:0000250" key="1">
    <source>
        <dbReference type="UniProtKB" id="P15367"/>
    </source>
</evidence>
<evidence type="ECO:0000250" key="2">
    <source>
        <dbReference type="UniProtKB" id="P67812"/>
    </source>
</evidence>
<evidence type="ECO:0000255" key="3"/>
<evidence type="ECO:0000305" key="4"/>